<dbReference type="EMBL" id="AABR03024064">
    <property type="status" value="NOT_ANNOTATED_CDS"/>
    <property type="molecule type" value="Genomic_DNA"/>
</dbReference>
<dbReference type="EMBL" id="AABR03024168">
    <property type="status" value="NOT_ANNOTATED_CDS"/>
    <property type="molecule type" value="Genomic_DNA"/>
</dbReference>
<dbReference type="EMBL" id="AABR03024328">
    <property type="status" value="NOT_ANNOTATED_CDS"/>
    <property type="molecule type" value="Genomic_DNA"/>
</dbReference>
<dbReference type="EMBL" id="AABR03026408">
    <property type="status" value="NOT_ANNOTATED_CDS"/>
    <property type="molecule type" value="Genomic_DNA"/>
</dbReference>
<dbReference type="EMBL" id="AABR03026968">
    <property type="status" value="NOT_ANNOTATED_CDS"/>
    <property type="molecule type" value="Genomic_DNA"/>
</dbReference>
<dbReference type="EMBL" id="AABR03029878">
    <property type="status" value="NOT_ANNOTATED_CDS"/>
    <property type="molecule type" value="Genomic_DNA"/>
</dbReference>
<dbReference type="SMR" id="P86411"/>
<dbReference type="FunCoup" id="P86411">
    <property type="interactions" value="2644"/>
</dbReference>
<dbReference type="STRING" id="10116.ENSRNOP00000015637"/>
<dbReference type="GlyGen" id="P86411">
    <property type="glycosylation" value="1 site"/>
</dbReference>
<dbReference type="iPTMnet" id="P86411"/>
<dbReference type="PhosphoSitePlus" id="P86411"/>
<dbReference type="PaxDb" id="10116-ENSRNOP00000015637"/>
<dbReference type="Ensembl" id="ENSRNOT00000113019.1">
    <property type="protein sequence ID" value="ENSRNOP00000084183.1"/>
    <property type="gene ID" value="ENSRNOG00000036964.5"/>
</dbReference>
<dbReference type="UCSC" id="RGD:1308023">
    <property type="organism name" value="rat"/>
</dbReference>
<dbReference type="AGR" id="RGD:1308023"/>
<dbReference type="RGD" id="1308023">
    <property type="gene designation" value="Ralgapa2"/>
</dbReference>
<dbReference type="eggNOG" id="KOG3686">
    <property type="taxonomic scope" value="Eukaryota"/>
</dbReference>
<dbReference type="GeneTree" id="ENSGT00950000183139"/>
<dbReference type="InParanoid" id="P86411"/>
<dbReference type="PhylomeDB" id="P86411"/>
<dbReference type="PRO" id="PR:P86411"/>
<dbReference type="Proteomes" id="UP000002494">
    <property type="component" value="Chromosome 3"/>
</dbReference>
<dbReference type="GO" id="GO:0005737">
    <property type="term" value="C:cytoplasm"/>
    <property type="evidence" value="ECO:0000250"/>
    <property type="project" value="UniProtKB"/>
</dbReference>
<dbReference type="GO" id="GO:0005634">
    <property type="term" value="C:nucleus"/>
    <property type="evidence" value="ECO:0007669"/>
    <property type="project" value="InterPro"/>
</dbReference>
<dbReference type="GO" id="GO:0005096">
    <property type="term" value="F:GTPase activator activity"/>
    <property type="evidence" value="ECO:0000314"/>
    <property type="project" value="UniProtKB"/>
</dbReference>
<dbReference type="GO" id="GO:0046982">
    <property type="term" value="F:protein heterodimerization activity"/>
    <property type="evidence" value="ECO:0000353"/>
    <property type="project" value="UniProtKB"/>
</dbReference>
<dbReference type="GO" id="GO:0090630">
    <property type="term" value="P:activation of GTPase activity"/>
    <property type="evidence" value="ECO:0000314"/>
    <property type="project" value="UniProtKB"/>
</dbReference>
<dbReference type="GO" id="GO:0032484">
    <property type="term" value="P:Ral protein signal transduction"/>
    <property type="evidence" value="ECO:0000266"/>
    <property type="project" value="RGD"/>
</dbReference>
<dbReference type="GO" id="GO:0060178">
    <property type="term" value="P:regulation of exocyst localization"/>
    <property type="evidence" value="ECO:0000266"/>
    <property type="project" value="RGD"/>
</dbReference>
<dbReference type="GO" id="GO:0032880">
    <property type="term" value="P:regulation of protein localization"/>
    <property type="evidence" value="ECO:0000266"/>
    <property type="project" value="RGD"/>
</dbReference>
<dbReference type="GO" id="GO:0051056">
    <property type="term" value="P:regulation of small GTPase mediated signal transduction"/>
    <property type="evidence" value="ECO:0007669"/>
    <property type="project" value="InterPro"/>
</dbReference>
<dbReference type="FunFam" id="3.40.50.11210:FF:000001">
    <property type="entry name" value="Ral GTPase-activating protein subunit alpha-1 isoform 1"/>
    <property type="match status" value="1"/>
</dbReference>
<dbReference type="Gene3D" id="3.40.50.11210">
    <property type="entry name" value="Rap/Ran-GAP"/>
    <property type="match status" value="1"/>
</dbReference>
<dbReference type="InterPro" id="IPR016024">
    <property type="entry name" value="ARM-type_fold"/>
</dbReference>
<dbReference type="InterPro" id="IPR035974">
    <property type="entry name" value="Rap/Ran-GAP_sf"/>
</dbReference>
<dbReference type="InterPro" id="IPR000331">
    <property type="entry name" value="Rap/Ran_GAP_dom"/>
</dbReference>
<dbReference type="InterPro" id="IPR046859">
    <property type="entry name" value="RGPA/RALGAPB_N"/>
</dbReference>
<dbReference type="InterPro" id="IPR027107">
    <property type="entry name" value="Tuberin/Ral-act_asu"/>
</dbReference>
<dbReference type="PANTHER" id="PTHR10063:SF2">
    <property type="entry name" value="RAL GTPASE-ACTIVATING PROTEIN SUBUNIT ALPHA-2"/>
    <property type="match status" value="1"/>
</dbReference>
<dbReference type="PANTHER" id="PTHR10063">
    <property type="entry name" value="TUBERIN"/>
    <property type="match status" value="1"/>
</dbReference>
<dbReference type="Pfam" id="PF20412">
    <property type="entry name" value="RALGAPB_N"/>
    <property type="match status" value="1"/>
</dbReference>
<dbReference type="Pfam" id="PF02145">
    <property type="entry name" value="Rap_GAP"/>
    <property type="match status" value="1"/>
</dbReference>
<dbReference type="SUPFAM" id="SSF48371">
    <property type="entry name" value="ARM repeat"/>
    <property type="match status" value="1"/>
</dbReference>
<dbReference type="SUPFAM" id="SSF111347">
    <property type="entry name" value="Rap/Ran-GAP"/>
    <property type="match status" value="1"/>
</dbReference>
<dbReference type="PROSITE" id="PS50085">
    <property type="entry name" value="RAPGAP"/>
    <property type="match status" value="1"/>
</dbReference>
<gene>
    <name evidence="7" type="primary">Ralgapa2</name>
</gene>
<proteinExistence type="evidence at protein level"/>
<comment type="function">
    <text evidence="6">Catalytic subunit of the heterodimeric RalGAP2 complex which acts as a GTPase activator for the Ras-like small GTPases RALA and RALB.</text>
</comment>
<comment type="subunit">
    <text evidence="6">Component of the heterodimeric RalGAP2 complex with RALGAPB. Heterodimerization is required for activity.</text>
</comment>
<comment type="subcellular location">
    <subcellularLocation>
        <location evidence="2">Cytoplasm</location>
    </subcellularLocation>
</comment>
<comment type="tissue specificity">
    <text evidence="6">Highly expressed in lung, liver, testis and thymus with lower levels in brain and heart (at protein level).</text>
</comment>
<reference evidence="8" key="1">
    <citation type="journal article" date="2004" name="Nature">
        <title>Genome sequence of the Brown Norway rat yields insights into mammalian evolution.</title>
        <authorList>
            <person name="Gibbs R.A."/>
            <person name="Weinstock G.M."/>
            <person name="Metzker M.L."/>
            <person name="Muzny D.M."/>
            <person name="Sodergren E.J."/>
            <person name="Scherer S."/>
            <person name="Scott G."/>
            <person name="Steffen D."/>
            <person name="Worley K.C."/>
            <person name="Burch P.E."/>
            <person name="Okwuonu G."/>
            <person name="Hines S."/>
            <person name="Lewis L."/>
            <person name="Deramo C."/>
            <person name="Delgado O."/>
            <person name="Dugan-Rocha S."/>
            <person name="Miner G."/>
            <person name="Morgan M."/>
            <person name="Hawes A."/>
            <person name="Gill R."/>
            <person name="Holt R.A."/>
            <person name="Adams M.D."/>
            <person name="Amanatides P.G."/>
            <person name="Baden-Tillson H."/>
            <person name="Barnstead M."/>
            <person name="Chin S."/>
            <person name="Evans C.A."/>
            <person name="Ferriera S."/>
            <person name="Fosler C."/>
            <person name="Glodek A."/>
            <person name="Gu Z."/>
            <person name="Jennings D."/>
            <person name="Kraft C.L."/>
            <person name="Nguyen T."/>
            <person name="Pfannkoch C.M."/>
            <person name="Sitter C."/>
            <person name="Sutton G.G."/>
            <person name="Venter J.C."/>
            <person name="Woodage T."/>
            <person name="Smith D."/>
            <person name="Lee H.-M."/>
            <person name="Gustafson E."/>
            <person name="Cahill P."/>
            <person name="Kana A."/>
            <person name="Doucette-Stamm L."/>
            <person name="Weinstock K."/>
            <person name="Fechtel K."/>
            <person name="Weiss R.B."/>
            <person name="Dunn D.M."/>
            <person name="Green E.D."/>
            <person name="Blakesley R.W."/>
            <person name="Bouffard G.G."/>
            <person name="De Jong P.J."/>
            <person name="Osoegawa K."/>
            <person name="Zhu B."/>
            <person name="Marra M."/>
            <person name="Schein J."/>
            <person name="Bosdet I."/>
            <person name="Fjell C."/>
            <person name="Jones S."/>
            <person name="Krzywinski M."/>
            <person name="Mathewson C."/>
            <person name="Siddiqui A."/>
            <person name="Wye N."/>
            <person name="McPherson J."/>
            <person name="Zhao S."/>
            <person name="Fraser C.M."/>
            <person name="Shetty J."/>
            <person name="Shatsman S."/>
            <person name="Geer K."/>
            <person name="Chen Y."/>
            <person name="Abramzon S."/>
            <person name="Nierman W.C."/>
            <person name="Havlak P.H."/>
            <person name="Chen R."/>
            <person name="Durbin K.J."/>
            <person name="Egan A."/>
            <person name="Ren Y."/>
            <person name="Song X.-Z."/>
            <person name="Li B."/>
            <person name="Liu Y."/>
            <person name="Qin X."/>
            <person name="Cawley S."/>
            <person name="Cooney A.J."/>
            <person name="D'Souza L.M."/>
            <person name="Martin K."/>
            <person name="Wu J.Q."/>
            <person name="Gonzalez-Garay M.L."/>
            <person name="Jackson A.R."/>
            <person name="Kalafus K.J."/>
            <person name="McLeod M.P."/>
            <person name="Milosavljevic A."/>
            <person name="Virk D."/>
            <person name="Volkov A."/>
            <person name="Wheeler D.A."/>
            <person name="Zhang Z."/>
            <person name="Bailey J.A."/>
            <person name="Eichler E.E."/>
            <person name="Tuzun E."/>
            <person name="Birney E."/>
            <person name="Mongin E."/>
            <person name="Ureta-Vidal A."/>
            <person name="Woodwark C."/>
            <person name="Zdobnov E."/>
            <person name="Bork P."/>
            <person name="Suyama M."/>
            <person name="Torrents D."/>
            <person name="Alexandersson M."/>
            <person name="Trask B.J."/>
            <person name="Young J.M."/>
            <person name="Huang H."/>
            <person name="Wang H."/>
            <person name="Xing H."/>
            <person name="Daniels S."/>
            <person name="Gietzen D."/>
            <person name="Schmidt J."/>
            <person name="Stevens K."/>
            <person name="Vitt U."/>
            <person name="Wingrove J."/>
            <person name="Camara F."/>
            <person name="Mar Alba M."/>
            <person name="Abril J.F."/>
            <person name="Guigo R."/>
            <person name="Smit A."/>
            <person name="Dubchak I."/>
            <person name="Rubin E.M."/>
            <person name="Couronne O."/>
            <person name="Poliakov A."/>
            <person name="Huebner N."/>
            <person name="Ganten D."/>
            <person name="Goesele C."/>
            <person name="Hummel O."/>
            <person name="Kreitler T."/>
            <person name="Lee Y.-A."/>
            <person name="Monti J."/>
            <person name="Schulz H."/>
            <person name="Zimdahl H."/>
            <person name="Himmelbauer H."/>
            <person name="Lehrach H."/>
            <person name="Jacob H.J."/>
            <person name="Bromberg S."/>
            <person name="Gullings-Handley J."/>
            <person name="Jensen-Seaman M.I."/>
            <person name="Kwitek A.E."/>
            <person name="Lazar J."/>
            <person name="Pasko D."/>
            <person name="Tonellato P.J."/>
            <person name="Twigger S."/>
            <person name="Ponting C.P."/>
            <person name="Duarte J.M."/>
            <person name="Rice S."/>
            <person name="Goodstadt L."/>
            <person name="Beatson S.A."/>
            <person name="Emes R.D."/>
            <person name="Winter E.E."/>
            <person name="Webber C."/>
            <person name="Brandt P."/>
            <person name="Nyakatura G."/>
            <person name="Adetobi M."/>
            <person name="Chiaromonte F."/>
            <person name="Elnitski L."/>
            <person name="Eswara P."/>
            <person name="Hardison R.C."/>
            <person name="Hou M."/>
            <person name="Kolbe D."/>
            <person name="Makova K."/>
            <person name="Miller W."/>
            <person name="Nekrutenko A."/>
            <person name="Riemer C."/>
            <person name="Schwartz S."/>
            <person name="Taylor J."/>
            <person name="Yang S."/>
            <person name="Zhang Y."/>
            <person name="Lindpaintner K."/>
            <person name="Andrews T.D."/>
            <person name="Caccamo M."/>
            <person name="Clamp M."/>
            <person name="Clarke L."/>
            <person name="Curwen V."/>
            <person name="Durbin R.M."/>
            <person name="Eyras E."/>
            <person name="Searle S.M."/>
            <person name="Cooper G.M."/>
            <person name="Batzoglou S."/>
            <person name="Brudno M."/>
            <person name="Sidow A."/>
            <person name="Stone E.A."/>
            <person name="Payseur B.A."/>
            <person name="Bourque G."/>
            <person name="Lopez-Otin C."/>
            <person name="Puente X.S."/>
            <person name="Chakrabarti K."/>
            <person name="Chatterji S."/>
            <person name="Dewey C."/>
            <person name="Pachter L."/>
            <person name="Bray N."/>
            <person name="Yap V.B."/>
            <person name="Caspi A."/>
            <person name="Tesler G."/>
            <person name="Pevzner P.A."/>
            <person name="Haussler D."/>
            <person name="Roskin K.M."/>
            <person name="Baertsch R."/>
            <person name="Clawson H."/>
            <person name="Furey T.S."/>
            <person name="Hinrichs A.S."/>
            <person name="Karolchik D."/>
            <person name="Kent W.J."/>
            <person name="Rosenbloom K.R."/>
            <person name="Trumbower H."/>
            <person name="Weirauch M."/>
            <person name="Cooper D.N."/>
            <person name="Stenson P.D."/>
            <person name="Ma B."/>
            <person name="Brent M."/>
            <person name="Arumugam M."/>
            <person name="Shteynberg D."/>
            <person name="Copley R.R."/>
            <person name="Taylor M.S."/>
            <person name="Riethman H."/>
            <person name="Mudunuri U."/>
            <person name="Peterson J."/>
            <person name="Guyer M."/>
            <person name="Felsenfeld A."/>
            <person name="Old S."/>
            <person name="Mockrin S."/>
            <person name="Collins F.S."/>
        </authorList>
    </citation>
    <scope>NUCLEOTIDE SEQUENCE [LARGE SCALE GENOMIC DNA]</scope>
    <source>
        <strain evidence="5">Brown Norway</strain>
    </source>
</reference>
<reference evidence="8" key="2">
    <citation type="journal article" date="2009" name="J. Biol. Chem.">
        <title>Tuberous sclerosis tumor suppressor complex-like complexes act as GTPase-activating proteins for Ral GTPases.</title>
        <authorList>
            <person name="Shirakawa R."/>
            <person name="Fukai S."/>
            <person name="Kawato M."/>
            <person name="Higashi T."/>
            <person name="Kondo H."/>
            <person name="Ikeda T."/>
            <person name="Nakayama E."/>
            <person name="Okawa K."/>
            <person name="Nureki O."/>
            <person name="Kimura T."/>
            <person name="Kita T."/>
            <person name="Horiuchi H."/>
        </authorList>
    </citation>
    <scope>FUNCTION</scope>
    <scope>SUBUNIT</scope>
    <scope>TISSUE SPECIFICITY</scope>
</reference>
<reference key="3">
    <citation type="journal article" date="2012" name="Nat. Commun.">
        <title>Quantitative maps of protein phosphorylation sites across 14 different rat organs and tissues.</title>
        <authorList>
            <person name="Lundby A."/>
            <person name="Secher A."/>
            <person name="Lage K."/>
            <person name="Nordsborg N.B."/>
            <person name="Dmytriyev A."/>
            <person name="Lundby C."/>
            <person name="Olsen J.V."/>
        </authorList>
    </citation>
    <scope>PHOSPHORYLATION [LARGE SCALE ANALYSIS] AT SER-486; SER-696; SER-819 AND SER-820</scope>
    <scope>IDENTIFICATION BY MASS SPECTROMETRY [LARGE SCALE ANALYSIS]</scope>
</reference>
<sequence>MFSRRSHGDVKKSTQKVLDPKKDVLTRLKHLRALLDNVDASDLKQFFETNYSQIYFIFYENFITLENSLKLKGNNKSQREELDSILFLFEKILQFLPERIFFRWHYQSIGSTLKKLLHTGNSIKIRCEGIRLFLLWLQALQTNCAEEQVLIFACLVPGFPAVLSSRGPCTLETLINPSPSVVDAKIYPEEITPLLPAVSGEKIAEDQTCFFLQILLKYMVIQAASLEWKNKENQDTGFKFLFTLFRKYYLPHLFPSFTKLTNIYKPVLEIPHLRPKPLYVTVTRDNETIYSTKIPYMAARVVFIKWIVTFFLEKKYLTATQNTKNGVDVLPKIIQTVGGGAIQEKVPELDGAGATEQDKSHSNSSTLSDRRLSNSSLCSIEEEHRTVYEMVQRILLSTRGYVNFVNEVFRQAFLLPSCEISITRKVVQVYRKWILQNKPVFMEEPDKKDVAEEDADKLGLSETDSKEVSSESSGHKRSSSWGRTYSFTSAMSRGCVTEEDNTNVKAGAQAMLQVFLTNAANVFLLEPCVEVPMLLREQVDACKAVLIIFRRMIMELTMNQKTWEQMLQILLRITEAVMQKPKDKLVQDSFARSLAGLLFRTLIVAWIRANLCVYISRELWDDFLRVLSSLTEWEELITEWSNIMDSLTAVLARTVYGVEMTNLPLDKLSEQKEKKQRGKGCVLEPQKGTAVGRSFSLSWRSHPDVTEPMRFRSATTSGAPGVEKARNTVRQKATEVEEFQQAESTAAADCDYLVVGQQPVPRSSSTSDITERLYSDSSQGQKVENSQNLSSSEPKSVQESKGHVTHEHEGVTILVRRSSSPAELDLKEESQQTHGRCRERQKSESTGSDMAVGYSNEAELPVSPWQTCEEDPELSTPTDAVADSDARHWLQLSPTDASNLTESRECLADDCSIIAGGNLTGWHPDSAAVLWRRVLGILGDVNNIQSPKIHAKVFSYLYELWYKLAKIRDNLAISLDNQSSPSPPLLIPPLRMFASWLFKATTLPNEYKEGKLQAYKLICAMMTRRQDVLPNSDFLVHFYLVMHLGLTSEDQDVLNTIIKNCSPRFFSLGLPGFSMLVGDFITAAARVLSTDMLAAPRSEALTLLGSLVCFPNTYQEIPLLQSVPEVSDVVTGAEDVKHYLINILLKNATEEPNECARCIAICSLGVWICEELAQCASHPQVKDAINVIGVTLKFPNKIVAQVACDVLQLLVSYWEKLQMFETALPRKMAEILVATIAFLLPSAEYSSVETDKKFIVSLLLCLLDWCMALPVSALLHPVSTAVIEELHPSRAPLLDYIYRVLHCCVCGSSTYTQQSHYTLTLADLSSTDYDPFLPLANVRNSEPVQYHSSADLGNLLTVEEEKKRRSVELIPLTARMVMAHLVNHLGHYPLSGGPAVLHSLVSENHDNAHVEGTELSSEVFRSPNLQLFVFNDSTLISYLQTPAEGPAGGTSGGSLSDVRVIVRDISGKYSWDGKVLYGPLEGRLAPSGRNPSFQISGWHHHTCGPQSNLFHGEEGDDVLDKLLENIGHTSPECLLPSQLNLNEPSPTPSAMNCDQEKEIIEVILRQSTQEDEYVQRCHSNSAVKVTSQGQPSPVEPRGPFYFCRLLLDDLGMNSWDRRKNFHLLKKNSKLLRELKNLDSRQCRETHKIAVFYIAEGQEDKCSILANERGSQAYEDFVAGLGWEVDLSTHCGFMGGLQRNGSTGQTAPYYATSTVEVIFHVSTRMPSDSDDSLTKKLRHLGNDEVHIVWSEHSRDYRRGIIPTAFGDVSIIIYPMKNHMFFITITKKPEVPFFGPLFDGAIVSGKLLPSLICATCINASRAVKCLIPLYQSFYEERALYLEAIIQNHREVMTFEDFAAQVFSPSPSYSLSGTD</sequence>
<organism>
    <name type="scientific">Rattus norvegicus</name>
    <name type="common">Rat</name>
    <dbReference type="NCBI Taxonomy" id="10116"/>
    <lineage>
        <taxon>Eukaryota</taxon>
        <taxon>Metazoa</taxon>
        <taxon>Chordata</taxon>
        <taxon>Craniata</taxon>
        <taxon>Vertebrata</taxon>
        <taxon>Euteleostomi</taxon>
        <taxon>Mammalia</taxon>
        <taxon>Eutheria</taxon>
        <taxon>Euarchontoglires</taxon>
        <taxon>Glires</taxon>
        <taxon>Rodentia</taxon>
        <taxon>Myomorpha</taxon>
        <taxon>Muroidea</taxon>
        <taxon>Muridae</taxon>
        <taxon>Murinae</taxon>
        <taxon>Rattus</taxon>
    </lineage>
</organism>
<accession>P86411</accession>
<protein>
    <recommendedName>
        <fullName>Ral GTPase-activating protein subunit alpha-2</fullName>
    </recommendedName>
    <alternativeName>
        <fullName evidence="2">250 kDa substrate of Akt</fullName>
        <shortName evidence="2">AS250</shortName>
    </alternativeName>
    <alternativeName>
        <fullName evidence="7">p220</fullName>
    </alternativeName>
</protein>
<keyword id="KW-0963">Cytoplasm</keyword>
<keyword id="KW-0343">GTPase activation</keyword>
<keyword id="KW-0597">Phosphoprotein</keyword>
<keyword id="KW-1185">Reference proteome</keyword>
<evidence type="ECO:0000250" key="1">
    <source>
        <dbReference type="UniProtKB" id="A3KGS3"/>
    </source>
</evidence>
<evidence type="ECO:0000250" key="2">
    <source>
        <dbReference type="UniProtKB" id="Q2PPJ7"/>
    </source>
</evidence>
<evidence type="ECO:0000255" key="3">
    <source>
        <dbReference type="PROSITE-ProRule" id="PRU00165"/>
    </source>
</evidence>
<evidence type="ECO:0000256" key="4">
    <source>
        <dbReference type="SAM" id="MobiDB-lite"/>
    </source>
</evidence>
<evidence type="ECO:0000269" key="5">
    <source>
    </source>
</evidence>
<evidence type="ECO:0000269" key="6">
    <source>
    </source>
</evidence>
<evidence type="ECO:0000303" key="7">
    <source>
    </source>
</evidence>
<evidence type="ECO:0000305" key="8"/>
<evidence type="ECO:0007744" key="9">
    <source>
    </source>
</evidence>
<name>RGPA2_RAT</name>
<feature type="chain" id="PRO_0000390695" description="Ral GTPase-activating protein subunit alpha-2">
    <location>
        <begin position="1"/>
        <end position="1872"/>
    </location>
</feature>
<feature type="domain" description="Rap-GAP" evidence="3">
    <location>
        <begin position="1634"/>
        <end position="1842"/>
    </location>
</feature>
<feature type="region of interest" description="Disordered" evidence="4">
    <location>
        <begin position="446"/>
        <end position="481"/>
    </location>
</feature>
<feature type="region of interest" description="Disordered" evidence="4">
    <location>
        <begin position="711"/>
        <end position="730"/>
    </location>
</feature>
<feature type="region of interest" description="Disordered" evidence="4">
    <location>
        <begin position="758"/>
        <end position="849"/>
    </location>
</feature>
<feature type="compositionally biased region" description="Basic and acidic residues" evidence="4">
    <location>
        <begin position="446"/>
        <end position="469"/>
    </location>
</feature>
<feature type="compositionally biased region" description="Polar residues" evidence="4">
    <location>
        <begin position="775"/>
        <end position="795"/>
    </location>
</feature>
<feature type="compositionally biased region" description="Basic and acidic residues" evidence="4">
    <location>
        <begin position="796"/>
        <end position="810"/>
    </location>
</feature>
<feature type="compositionally biased region" description="Basic and acidic residues" evidence="4">
    <location>
        <begin position="824"/>
        <end position="843"/>
    </location>
</feature>
<feature type="modified residue" description="Phosphoserine" evidence="1">
    <location>
        <position position="373"/>
    </location>
</feature>
<feature type="modified residue" description="Phosphoserine" evidence="1">
    <location>
        <position position="376"/>
    </location>
</feature>
<feature type="modified residue" description="Phosphoserine" evidence="1">
    <location>
        <position position="379"/>
    </location>
</feature>
<feature type="modified residue" description="Phosphoserine" evidence="9">
    <location>
        <position position="486"/>
    </location>
</feature>
<feature type="modified residue" description="Phosphoserine" evidence="9">
    <location>
        <position position="696"/>
    </location>
</feature>
<feature type="modified residue" description="Phosphothreonine; by PKB" evidence="2">
    <location>
        <position position="715"/>
    </location>
</feature>
<feature type="modified residue" description="Phosphoserine" evidence="9">
    <location>
        <position position="819"/>
    </location>
</feature>
<feature type="modified residue" description="Phosphoserine" evidence="9">
    <location>
        <position position="820"/>
    </location>
</feature>
<feature type="modified residue" description="Phosphoserine" evidence="2">
    <location>
        <position position="1592"/>
    </location>
</feature>